<accession>A1KJ60</accession>
<reference key="1">
    <citation type="journal article" date="2007" name="Proc. Natl. Acad. Sci. U.S.A.">
        <title>Genome plasticity of BCG and impact on vaccine efficacy.</title>
        <authorList>
            <person name="Brosch R."/>
            <person name="Gordon S.V."/>
            <person name="Garnier T."/>
            <person name="Eiglmeier K."/>
            <person name="Frigui W."/>
            <person name="Valenti P."/>
            <person name="Dos Santos S."/>
            <person name="Duthoy S."/>
            <person name="Lacroix C."/>
            <person name="Garcia-Pelayo C."/>
            <person name="Inwald J.K."/>
            <person name="Golby P."/>
            <person name="Garcia J.N."/>
            <person name="Hewinson R.G."/>
            <person name="Behr M.A."/>
            <person name="Quail M.A."/>
            <person name="Churcher C."/>
            <person name="Barrell B.G."/>
            <person name="Parkhill J."/>
            <person name="Cole S.T."/>
        </authorList>
    </citation>
    <scope>NUCLEOTIDE SEQUENCE [LARGE SCALE GENOMIC DNA]</scope>
    <source>
        <strain>BCG / Pasteur 1173P2</strain>
    </source>
</reference>
<feature type="chain" id="PRO_1000049011" description="Large ribosomal subunit protein bL20">
    <location>
        <begin position="1"/>
        <end position="129"/>
    </location>
</feature>
<comment type="function">
    <text evidence="1">Binds directly to 23S ribosomal RNA and is necessary for the in vitro assembly process of the 50S ribosomal subunit. It is not involved in the protein synthesizing functions of that subunit.</text>
</comment>
<comment type="similarity">
    <text evidence="1">Belongs to the bacterial ribosomal protein bL20 family.</text>
</comment>
<dbReference type="EMBL" id="AM408590">
    <property type="protein sequence ID" value="CAL71669.1"/>
    <property type="molecule type" value="Genomic_DNA"/>
</dbReference>
<dbReference type="RefSeq" id="WP_003408108.1">
    <property type="nucleotide sequence ID" value="NC_008769.1"/>
</dbReference>
<dbReference type="SMR" id="A1KJ60"/>
<dbReference type="GeneID" id="45425613"/>
<dbReference type="KEGG" id="mbb:BCG_1682"/>
<dbReference type="HOGENOM" id="CLU_123265_0_0_11"/>
<dbReference type="Proteomes" id="UP000001472">
    <property type="component" value="Chromosome"/>
</dbReference>
<dbReference type="GO" id="GO:1990904">
    <property type="term" value="C:ribonucleoprotein complex"/>
    <property type="evidence" value="ECO:0007669"/>
    <property type="project" value="UniProtKB-KW"/>
</dbReference>
<dbReference type="GO" id="GO:0005840">
    <property type="term" value="C:ribosome"/>
    <property type="evidence" value="ECO:0007669"/>
    <property type="project" value="UniProtKB-KW"/>
</dbReference>
<dbReference type="GO" id="GO:0019843">
    <property type="term" value="F:rRNA binding"/>
    <property type="evidence" value="ECO:0007669"/>
    <property type="project" value="UniProtKB-UniRule"/>
</dbReference>
<dbReference type="GO" id="GO:0003735">
    <property type="term" value="F:structural constituent of ribosome"/>
    <property type="evidence" value="ECO:0007669"/>
    <property type="project" value="InterPro"/>
</dbReference>
<dbReference type="GO" id="GO:0000027">
    <property type="term" value="P:ribosomal large subunit assembly"/>
    <property type="evidence" value="ECO:0007669"/>
    <property type="project" value="UniProtKB-UniRule"/>
</dbReference>
<dbReference type="GO" id="GO:0006412">
    <property type="term" value="P:translation"/>
    <property type="evidence" value="ECO:0007669"/>
    <property type="project" value="InterPro"/>
</dbReference>
<dbReference type="CDD" id="cd07026">
    <property type="entry name" value="Ribosomal_L20"/>
    <property type="match status" value="1"/>
</dbReference>
<dbReference type="FunFam" id="1.10.1900.20:FF:000001">
    <property type="entry name" value="50S ribosomal protein L20"/>
    <property type="match status" value="1"/>
</dbReference>
<dbReference type="Gene3D" id="6.10.160.10">
    <property type="match status" value="1"/>
</dbReference>
<dbReference type="Gene3D" id="1.10.1900.20">
    <property type="entry name" value="Ribosomal protein L20"/>
    <property type="match status" value="1"/>
</dbReference>
<dbReference type="HAMAP" id="MF_00382">
    <property type="entry name" value="Ribosomal_bL20"/>
    <property type="match status" value="1"/>
</dbReference>
<dbReference type="InterPro" id="IPR005813">
    <property type="entry name" value="Ribosomal_bL20"/>
</dbReference>
<dbReference type="InterPro" id="IPR049946">
    <property type="entry name" value="RIBOSOMAL_L20_CS"/>
</dbReference>
<dbReference type="InterPro" id="IPR035566">
    <property type="entry name" value="Ribosomal_protein_bL20_C"/>
</dbReference>
<dbReference type="NCBIfam" id="TIGR01032">
    <property type="entry name" value="rplT_bact"/>
    <property type="match status" value="1"/>
</dbReference>
<dbReference type="PANTHER" id="PTHR10986">
    <property type="entry name" value="39S RIBOSOMAL PROTEIN L20"/>
    <property type="match status" value="1"/>
</dbReference>
<dbReference type="Pfam" id="PF00453">
    <property type="entry name" value="Ribosomal_L20"/>
    <property type="match status" value="1"/>
</dbReference>
<dbReference type="PRINTS" id="PR00062">
    <property type="entry name" value="RIBOSOMALL20"/>
</dbReference>
<dbReference type="SUPFAM" id="SSF74731">
    <property type="entry name" value="Ribosomal protein L20"/>
    <property type="match status" value="1"/>
</dbReference>
<dbReference type="PROSITE" id="PS00937">
    <property type="entry name" value="RIBOSOMAL_L20"/>
    <property type="match status" value="1"/>
</dbReference>
<proteinExistence type="inferred from homology"/>
<keyword id="KW-0687">Ribonucleoprotein</keyword>
<keyword id="KW-0689">Ribosomal protein</keyword>
<keyword id="KW-0694">RNA-binding</keyword>
<keyword id="KW-0699">rRNA-binding</keyword>
<organism>
    <name type="scientific">Mycobacterium bovis (strain BCG / Pasteur 1173P2)</name>
    <dbReference type="NCBI Taxonomy" id="410289"/>
    <lineage>
        <taxon>Bacteria</taxon>
        <taxon>Bacillati</taxon>
        <taxon>Actinomycetota</taxon>
        <taxon>Actinomycetes</taxon>
        <taxon>Mycobacteriales</taxon>
        <taxon>Mycobacteriaceae</taxon>
        <taxon>Mycobacterium</taxon>
        <taxon>Mycobacterium tuberculosis complex</taxon>
    </lineage>
</organism>
<name>RL20_MYCBP</name>
<protein>
    <recommendedName>
        <fullName evidence="1">Large ribosomal subunit protein bL20</fullName>
    </recommendedName>
    <alternativeName>
        <fullName evidence="2">50S ribosomal protein L20</fullName>
    </alternativeName>
</protein>
<evidence type="ECO:0000255" key="1">
    <source>
        <dbReference type="HAMAP-Rule" id="MF_00382"/>
    </source>
</evidence>
<evidence type="ECO:0000305" key="2"/>
<sequence>MARVKRAVNAHKKRRSILKASRGYRGQRSRLYRKAKEQQLHSLNYAYRDRRARKGEFRKLWIARINAAARLNDITYNRLIQGLKAAGVEVDRKNLADIAISDPAAFTALVDVARAALPEDVNAPSGEAA</sequence>
<gene>
    <name evidence="1" type="primary">rplT</name>
    <name type="ordered locus">BCG_1682</name>
</gene>